<proteinExistence type="inferred from homology"/>
<accession>Q01WA4</accession>
<feature type="chain" id="PRO_1000052833" description="Large ribosomal subunit protein uL5">
    <location>
        <begin position="1"/>
        <end position="180"/>
    </location>
</feature>
<reference key="1">
    <citation type="journal article" date="2009" name="Appl. Environ. Microbiol.">
        <title>Three genomes from the phylum Acidobacteria provide insight into the lifestyles of these microorganisms in soils.</title>
        <authorList>
            <person name="Ward N.L."/>
            <person name="Challacombe J.F."/>
            <person name="Janssen P.H."/>
            <person name="Henrissat B."/>
            <person name="Coutinho P.M."/>
            <person name="Wu M."/>
            <person name="Xie G."/>
            <person name="Haft D.H."/>
            <person name="Sait M."/>
            <person name="Badger J."/>
            <person name="Barabote R.D."/>
            <person name="Bradley B."/>
            <person name="Brettin T.S."/>
            <person name="Brinkac L.M."/>
            <person name="Bruce D."/>
            <person name="Creasy T."/>
            <person name="Daugherty S.C."/>
            <person name="Davidsen T.M."/>
            <person name="DeBoy R.T."/>
            <person name="Detter J.C."/>
            <person name="Dodson R.J."/>
            <person name="Durkin A.S."/>
            <person name="Ganapathy A."/>
            <person name="Gwinn-Giglio M."/>
            <person name="Han C.S."/>
            <person name="Khouri H."/>
            <person name="Kiss H."/>
            <person name="Kothari S.P."/>
            <person name="Madupu R."/>
            <person name="Nelson K.E."/>
            <person name="Nelson W.C."/>
            <person name="Paulsen I."/>
            <person name="Penn K."/>
            <person name="Ren Q."/>
            <person name="Rosovitz M.J."/>
            <person name="Selengut J.D."/>
            <person name="Shrivastava S."/>
            <person name="Sullivan S.A."/>
            <person name="Tapia R."/>
            <person name="Thompson L.S."/>
            <person name="Watkins K.L."/>
            <person name="Yang Q."/>
            <person name="Yu C."/>
            <person name="Zafar N."/>
            <person name="Zhou L."/>
            <person name="Kuske C.R."/>
        </authorList>
    </citation>
    <scope>NUCLEOTIDE SEQUENCE [LARGE SCALE GENOMIC DNA]</scope>
    <source>
        <strain>Ellin6076</strain>
    </source>
</reference>
<evidence type="ECO:0000255" key="1">
    <source>
        <dbReference type="HAMAP-Rule" id="MF_01333"/>
    </source>
</evidence>
<evidence type="ECO:0000305" key="2"/>
<sequence>MAARLREHYQTKTVPALTKEFSYKNVMAVPKLEKITINIGMGEATQNAKLMDGAVNELGQIAGQKPVITKATKSIAQFKLREGQAIGCMVTLRGDRMFEFFDRLVNVALPRVRDFRGVSSKSFDGRGNYTLGIKDQLIFPEIDYSKVDKTKGMNICITTTARTDAEGLALLRTMGMPFRQ</sequence>
<dbReference type="EMBL" id="CP000473">
    <property type="protein sequence ID" value="ABJ86061.1"/>
    <property type="molecule type" value="Genomic_DNA"/>
</dbReference>
<dbReference type="SMR" id="Q01WA4"/>
<dbReference type="FunCoup" id="Q01WA4">
    <property type="interactions" value="707"/>
</dbReference>
<dbReference type="STRING" id="234267.Acid_5106"/>
<dbReference type="KEGG" id="sus:Acid_5106"/>
<dbReference type="eggNOG" id="COG0094">
    <property type="taxonomic scope" value="Bacteria"/>
</dbReference>
<dbReference type="HOGENOM" id="CLU_061015_2_1_0"/>
<dbReference type="InParanoid" id="Q01WA4"/>
<dbReference type="OrthoDB" id="9806626at2"/>
<dbReference type="GO" id="GO:1990904">
    <property type="term" value="C:ribonucleoprotein complex"/>
    <property type="evidence" value="ECO:0007669"/>
    <property type="project" value="UniProtKB-KW"/>
</dbReference>
<dbReference type="GO" id="GO:0005840">
    <property type="term" value="C:ribosome"/>
    <property type="evidence" value="ECO:0007669"/>
    <property type="project" value="UniProtKB-KW"/>
</dbReference>
<dbReference type="GO" id="GO:0019843">
    <property type="term" value="F:rRNA binding"/>
    <property type="evidence" value="ECO:0007669"/>
    <property type="project" value="UniProtKB-UniRule"/>
</dbReference>
<dbReference type="GO" id="GO:0003735">
    <property type="term" value="F:structural constituent of ribosome"/>
    <property type="evidence" value="ECO:0007669"/>
    <property type="project" value="InterPro"/>
</dbReference>
<dbReference type="GO" id="GO:0000049">
    <property type="term" value="F:tRNA binding"/>
    <property type="evidence" value="ECO:0007669"/>
    <property type="project" value="UniProtKB-UniRule"/>
</dbReference>
<dbReference type="GO" id="GO:0006412">
    <property type="term" value="P:translation"/>
    <property type="evidence" value="ECO:0007669"/>
    <property type="project" value="UniProtKB-UniRule"/>
</dbReference>
<dbReference type="FunFam" id="3.30.1440.10:FF:000001">
    <property type="entry name" value="50S ribosomal protein L5"/>
    <property type="match status" value="1"/>
</dbReference>
<dbReference type="Gene3D" id="3.30.1440.10">
    <property type="match status" value="1"/>
</dbReference>
<dbReference type="HAMAP" id="MF_01333_B">
    <property type="entry name" value="Ribosomal_uL5_B"/>
    <property type="match status" value="1"/>
</dbReference>
<dbReference type="InterPro" id="IPR002132">
    <property type="entry name" value="Ribosomal_uL5"/>
</dbReference>
<dbReference type="InterPro" id="IPR020930">
    <property type="entry name" value="Ribosomal_uL5_bac-type"/>
</dbReference>
<dbReference type="InterPro" id="IPR031309">
    <property type="entry name" value="Ribosomal_uL5_C"/>
</dbReference>
<dbReference type="InterPro" id="IPR022803">
    <property type="entry name" value="Ribosomal_uL5_dom_sf"/>
</dbReference>
<dbReference type="InterPro" id="IPR031310">
    <property type="entry name" value="Ribosomal_uL5_N"/>
</dbReference>
<dbReference type="NCBIfam" id="NF000585">
    <property type="entry name" value="PRK00010.1"/>
    <property type="match status" value="1"/>
</dbReference>
<dbReference type="PANTHER" id="PTHR11994">
    <property type="entry name" value="60S RIBOSOMAL PROTEIN L11-RELATED"/>
    <property type="match status" value="1"/>
</dbReference>
<dbReference type="Pfam" id="PF00281">
    <property type="entry name" value="Ribosomal_L5"/>
    <property type="match status" value="1"/>
</dbReference>
<dbReference type="Pfam" id="PF00673">
    <property type="entry name" value="Ribosomal_L5_C"/>
    <property type="match status" value="1"/>
</dbReference>
<dbReference type="PIRSF" id="PIRSF002161">
    <property type="entry name" value="Ribosomal_L5"/>
    <property type="match status" value="1"/>
</dbReference>
<dbReference type="SUPFAM" id="SSF55282">
    <property type="entry name" value="RL5-like"/>
    <property type="match status" value="1"/>
</dbReference>
<keyword id="KW-0687">Ribonucleoprotein</keyword>
<keyword id="KW-0689">Ribosomal protein</keyword>
<keyword id="KW-0694">RNA-binding</keyword>
<keyword id="KW-0699">rRNA-binding</keyword>
<keyword id="KW-0820">tRNA-binding</keyword>
<organism>
    <name type="scientific">Solibacter usitatus (strain Ellin6076)</name>
    <dbReference type="NCBI Taxonomy" id="234267"/>
    <lineage>
        <taxon>Bacteria</taxon>
        <taxon>Pseudomonadati</taxon>
        <taxon>Acidobacteriota</taxon>
        <taxon>Terriglobia</taxon>
        <taxon>Bryobacterales</taxon>
        <taxon>Solibacteraceae</taxon>
        <taxon>Candidatus Solibacter</taxon>
    </lineage>
</organism>
<gene>
    <name evidence="1" type="primary">rplE</name>
    <name type="ordered locus">Acid_5106</name>
</gene>
<comment type="function">
    <text evidence="1">This is one of the proteins that bind and probably mediate the attachment of the 5S RNA into the large ribosomal subunit, where it forms part of the central protuberance. In the 70S ribosome it contacts protein S13 of the 30S subunit (bridge B1b), connecting the 2 subunits; this bridge is implicated in subunit movement. Contacts the P site tRNA; the 5S rRNA and some of its associated proteins might help stabilize positioning of ribosome-bound tRNAs.</text>
</comment>
<comment type="subunit">
    <text evidence="1">Part of the 50S ribosomal subunit; part of the 5S rRNA/L5/L18/L25 subcomplex. Contacts the 5S rRNA and the P site tRNA. Forms a bridge to the 30S subunit in the 70S ribosome.</text>
</comment>
<comment type="similarity">
    <text evidence="1">Belongs to the universal ribosomal protein uL5 family.</text>
</comment>
<protein>
    <recommendedName>
        <fullName evidence="1">Large ribosomal subunit protein uL5</fullName>
    </recommendedName>
    <alternativeName>
        <fullName evidence="2">50S ribosomal protein L5</fullName>
    </alternativeName>
</protein>
<name>RL5_SOLUE</name>